<keyword id="KW-0378">Hydrolase</keyword>
<keyword id="KW-0479">Metal-binding</keyword>
<keyword id="KW-0862">Zinc</keyword>
<organism>
    <name type="scientific">Saccharolobus islandicus (strain M.16.4 / Kamchatka #3)</name>
    <name type="common">Sulfolobus islandicus</name>
    <dbReference type="NCBI Taxonomy" id="426118"/>
    <lineage>
        <taxon>Archaea</taxon>
        <taxon>Thermoproteota</taxon>
        <taxon>Thermoprotei</taxon>
        <taxon>Sulfolobales</taxon>
        <taxon>Sulfolobaceae</taxon>
        <taxon>Saccharolobus</taxon>
    </lineage>
</organism>
<name>DTDA_SACI6</name>
<feature type="chain" id="PRO_1000212045" description="D-aminoacyl-tRNA deacylase">
    <location>
        <begin position="1"/>
        <end position="237"/>
    </location>
</feature>
<evidence type="ECO:0000255" key="1">
    <source>
        <dbReference type="HAMAP-Rule" id="MF_00562"/>
    </source>
</evidence>
<sequence>MDIKLVYSTSDPVGLTIKKLGYSFEEIDEDVTDFHYKNGEAIVIFSRHESKASIPSLTVHYPGNPSEEVMGGEPKKLGIAYPRLLTSILREIKKIDLDIEKTMEATHHGPTYQNVPVIFVEIGSDKTYWTNERIVRTLVDSTLKGIDKVDETDCRDYISGFGGPHYSKLFTKLADESCIGHVISKHYVDKLDDKVIIQAIANSVNNINKVVIDSLNLKQRERIIAALKSFDIHIQLR</sequence>
<comment type="function">
    <text evidence="1">D-aminoacyl-tRNA deacylase with broad substrate specificity. By recycling D-aminoacyl-tRNA to D-amino acids and free tRNA molecules, this enzyme counteracts the toxicity associated with the formation of D-aminoacyl-tRNA entities in vivo.</text>
</comment>
<comment type="catalytic activity">
    <reaction evidence="1">
        <text>a D-aminoacyl-tRNA + H2O = a tRNA + a D-alpha-amino acid + H(+)</text>
        <dbReference type="Rhea" id="RHEA:13953"/>
        <dbReference type="Rhea" id="RHEA-COMP:10123"/>
        <dbReference type="Rhea" id="RHEA-COMP:10124"/>
        <dbReference type="ChEBI" id="CHEBI:15377"/>
        <dbReference type="ChEBI" id="CHEBI:15378"/>
        <dbReference type="ChEBI" id="CHEBI:59871"/>
        <dbReference type="ChEBI" id="CHEBI:78442"/>
        <dbReference type="ChEBI" id="CHEBI:79333"/>
        <dbReference type="EC" id="3.1.1.96"/>
    </reaction>
</comment>
<comment type="catalytic activity">
    <reaction evidence="1">
        <text>glycyl-tRNA(Ala) + H2O = tRNA(Ala) + glycine + H(+)</text>
        <dbReference type="Rhea" id="RHEA:53744"/>
        <dbReference type="Rhea" id="RHEA-COMP:9657"/>
        <dbReference type="Rhea" id="RHEA-COMP:13640"/>
        <dbReference type="ChEBI" id="CHEBI:15377"/>
        <dbReference type="ChEBI" id="CHEBI:15378"/>
        <dbReference type="ChEBI" id="CHEBI:57305"/>
        <dbReference type="ChEBI" id="CHEBI:78442"/>
        <dbReference type="ChEBI" id="CHEBI:78522"/>
        <dbReference type="EC" id="3.1.1.96"/>
    </reaction>
</comment>
<comment type="cofactor">
    <cofactor evidence="1">
        <name>Zn(2+)</name>
        <dbReference type="ChEBI" id="CHEBI:29105"/>
    </cofactor>
    <text evidence="1">Binds 2 Zn(2+) ions per subunit.</text>
</comment>
<comment type="subunit">
    <text evidence="1">Monomer.</text>
</comment>
<comment type="similarity">
    <text evidence="1">Belongs to the DtdA deacylase family.</text>
</comment>
<gene>
    <name evidence="1" type="primary">dtdA</name>
    <name type="ordered locus">M164_0052</name>
</gene>
<proteinExistence type="inferred from homology"/>
<accession>C4KJG8</accession>
<protein>
    <recommendedName>
        <fullName evidence="1">D-aminoacyl-tRNA deacylase</fullName>
        <ecNumber evidence="1">3.1.1.96</ecNumber>
    </recommendedName>
    <alternativeName>
        <fullName>D-tyrosyl-tRNA(Tyr) deacylase</fullName>
    </alternativeName>
</protein>
<reference key="1">
    <citation type="journal article" date="2009" name="Proc. Natl. Acad. Sci. U.S.A.">
        <title>Biogeography of the Sulfolobus islandicus pan-genome.</title>
        <authorList>
            <person name="Reno M.L."/>
            <person name="Held N.L."/>
            <person name="Fields C.J."/>
            <person name="Burke P.V."/>
            <person name="Whitaker R.J."/>
        </authorList>
    </citation>
    <scope>NUCLEOTIDE SEQUENCE [LARGE SCALE GENOMIC DNA]</scope>
    <source>
        <strain>M.16.4 / Kamchatka #3</strain>
    </source>
</reference>
<dbReference type="EC" id="3.1.1.96" evidence="1"/>
<dbReference type="EMBL" id="CP001402">
    <property type="protein sequence ID" value="ACR40688.1"/>
    <property type="molecule type" value="Genomic_DNA"/>
</dbReference>
<dbReference type="RefSeq" id="WP_012710231.1">
    <property type="nucleotide sequence ID" value="NC_012726.1"/>
</dbReference>
<dbReference type="SMR" id="C4KJG8"/>
<dbReference type="KEGG" id="sid:M164_0052"/>
<dbReference type="HOGENOM" id="CLU_056464_1_0_2"/>
<dbReference type="Proteomes" id="UP000001479">
    <property type="component" value="Chromosome"/>
</dbReference>
<dbReference type="GO" id="GO:0051499">
    <property type="term" value="F:D-aminoacyl-tRNA deacylase activity"/>
    <property type="evidence" value="ECO:0007669"/>
    <property type="project" value="UniProtKB-UniRule"/>
</dbReference>
<dbReference type="GO" id="GO:0008270">
    <property type="term" value="F:zinc ion binding"/>
    <property type="evidence" value="ECO:0007669"/>
    <property type="project" value="UniProtKB-UniRule"/>
</dbReference>
<dbReference type="GO" id="GO:0019478">
    <property type="term" value="P:D-amino acid catabolic process"/>
    <property type="evidence" value="ECO:0007669"/>
    <property type="project" value="UniProtKB-UniRule"/>
</dbReference>
<dbReference type="Gene3D" id="3.40.50.10700">
    <property type="entry name" value="AF0625-like"/>
    <property type="match status" value="1"/>
</dbReference>
<dbReference type="Gene3D" id="3.40.630.50">
    <property type="entry name" value="AF0625-like"/>
    <property type="match status" value="1"/>
</dbReference>
<dbReference type="HAMAP" id="MF_00562">
    <property type="entry name" value="Deacylase_DtdA"/>
    <property type="match status" value="1"/>
</dbReference>
<dbReference type="InterPro" id="IPR018033">
    <property type="entry name" value="Deacylase_DtdA_archaea"/>
</dbReference>
<dbReference type="InterPro" id="IPR007508">
    <property type="entry name" value="DtdA"/>
</dbReference>
<dbReference type="NCBIfam" id="NF003070">
    <property type="entry name" value="PRK03995.1-1"/>
    <property type="match status" value="1"/>
</dbReference>
<dbReference type="PANTHER" id="PTHR34667">
    <property type="entry name" value="D-AMINOACYL-TRNA DEACYLASE"/>
    <property type="match status" value="1"/>
</dbReference>
<dbReference type="PANTHER" id="PTHR34667:SF1">
    <property type="entry name" value="D-AMINOACYL-TRNA DEACYLASE"/>
    <property type="match status" value="1"/>
</dbReference>
<dbReference type="Pfam" id="PF04414">
    <property type="entry name" value="tRNA_deacylase"/>
    <property type="match status" value="1"/>
</dbReference>
<dbReference type="PIRSF" id="PIRSF016210">
    <property type="entry name" value="UCP016210"/>
    <property type="match status" value="1"/>
</dbReference>
<dbReference type="SUPFAM" id="SSF142535">
    <property type="entry name" value="AF0625-like"/>
    <property type="match status" value="1"/>
</dbReference>